<sequence length="288" mass="32144">MSSYSTRQVGAANTLDYKVYIEKDGKLVSPFHDIPLYANEEKTILNMIVEVPRWTNAKLEISKEQKLNPIIQDTKKGKLRFVRNCFPHHGYIHNYGAFPQTWEDPNQSHPETKAKGDNDPLDVCEIGEKVATVGEVKQVKVLGVMALLDEGETDWKVIVIDVNDPLAPKLNDIEDVETHLPGLLRATNEWFRIYKIPDGKPENQFAFSGECKNKKYAEEVIGECAEAWEKLIKGESVDSKGIDLTNTTLSSTPSYSDAAAQEIPSASPAPAAPIDKSIDKWFFISGAH</sequence>
<accession>P83777</accession>
<accession>A0A1D8PI90</accession>
<accession>Q59Y59</accession>
<accession>Q59YB5</accession>
<dbReference type="EC" id="3.6.1.1"/>
<dbReference type="EMBL" id="CP017624">
    <property type="protein sequence ID" value="AOW27869.1"/>
    <property type="molecule type" value="Genomic_DNA"/>
</dbReference>
<dbReference type="RefSeq" id="XP_714437.2">
    <property type="nucleotide sequence ID" value="XM_709344.2"/>
</dbReference>
<dbReference type="SMR" id="P83777"/>
<dbReference type="BioGRID" id="1226932">
    <property type="interactions" value="2"/>
</dbReference>
<dbReference type="FunCoup" id="P83777">
    <property type="interactions" value="1065"/>
</dbReference>
<dbReference type="STRING" id="237561.P83777"/>
<dbReference type="EnsemblFungi" id="C2_08810C_A-T">
    <property type="protein sequence ID" value="C2_08810C_A-T-p1"/>
    <property type="gene ID" value="C2_08810C_A"/>
</dbReference>
<dbReference type="GeneID" id="3643874"/>
<dbReference type="KEGG" id="cal:CAALFM_C208810CA"/>
<dbReference type="CGD" id="CAL0000192002">
    <property type="gene designation" value="IPP1"/>
</dbReference>
<dbReference type="VEuPathDB" id="FungiDB:C2_08810C_A"/>
<dbReference type="eggNOG" id="KOG1626">
    <property type="taxonomic scope" value="Eukaryota"/>
</dbReference>
<dbReference type="HOGENOM" id="CLU_040684_0_1_1"/>
<dbReference type="InParanoid" id="P83777"/>
<dbReference type="OMA" id="LYANEQK"/>
<dbReference type="OrthoDB" id="1608002at2759"/>
<dbReference type="PRO" id="PR:P83777"/>
<dbReference type="Proteomes" id="UP000000559">
    <property type="component" value="Chromosome 2"/>
</dbReference>
<dbReference type="GO" id="GO:0005737">
    <property type="term" value="C:cytoplasm"/>
    <property type="evidence" value="ECO:0007669"/>
    <property type="project" value="UniProtKB-SubCell"/>
</dbReference>
<dbReference type="GO" id="GO:0062040">
    <property type="term" value="C:fungal biofilm matrix"/>
    <property type="evidence" value="ECO:0000314"/>
    <property type="project" value="CGD"/>
</dbReference>
<dbReference type="GO" id="GO:0030446">
    <property type="term" value="C:hyphal cell wall"/>
    <property type="evidence" value="ECO:0000314"/>
    <property type="project" value="CGD"/>
</dbReference>
<dbReference type="GO" id="GO:0004427">
    <property type="term" value="F:inorganic diphosphate phosphatase activity"/>
    <property type="evidence" value="ECO:0000318"/>
    <property type="project" value="GO_Central"/>
</dbReference>
<dbReference type="GO" id="GO:0000287">
    <property type="term" value="F:magnesium ion binding"/>
    <property type="evidence" value="ECO:0007669"/>
    <property type="project" value="InterPro"/>
</dbReference>
<dbReference type="GO" id="GO:0006796">
    <property type="term" value="P:phosphate-containing compound metabolic process"/>
    <property type="evidence" value="ECO:0000318"/>
    <property type="project" value="GO_Central"/>
</dbReference>
<dbReference type="CDD" id="cd00412">
    <property type="entry name" value="pyrophosphatase"/>
    <property type="match status" value="1"/>
</dbReference>
<dbReference type="FunFam" id="3.90.80.10:FF:000004">
    <property type="entry name" value="Inorganic pyrophosphatase"/>
    <property type="match status" value="1"/>
</dbReference>
<dbReference type="Gene3D" id="3.90.80.10">
    <property type="entry name" value="Inorganic pyrophosphatase"/>
    <property type="match status" value="1"/>
</dbReference>
<dbReference type="InterPro" id="IPR008162">
    <property type="entry name" value="Pyrophosphatase"/>
</dbReference>
<dbReference type="InterPro" id="IPR036649">
    <property type="entry name" value="Pyrophosphatase_sf"/>
</dbReference>
<dbReference type="PANTHER" id="PTHR10286">
    <property type="entry name" value="INORGANIC PYROPHOSPHATASE"/>
    <property type="match status" value="1"/>
</dbReference>
<dbReference type="Pfam" id="PF00719">
    <property type="entry name" value="Pyrophosphatase"/>
    <property type="match status" value="1"/>
</dbReference>
<dbReference type="SUPFAM" id="SSF50324">
    <property type="entry name" value="Inorganic pyrophosphatase"/>
    <property type="match status" value="1"/>
</dbReference>
<dbReference type="PROSITE" id="PS00387">
    <property type="entry name" value="PPASE"/>
    <property type="match status" value="1"/>
</dbReference>
<keyword id="KW-0963">Cytoplasm</keyword>
<keyword id="KW-0903">Direct protein sequencing</keyword>
<keyword id="KW-0378">Hydrolase</keyword>
<keyword id="KW-0460">Magnesium</keyword>
<keyword id="KW-0479">Metal-binding</keyword>
<keyword id="KW-1185">Reference proteome</keyword>
<name>IPYR_CANAL</name>
<organism>
    <name type="scientific">Candida albicans (strain SC5314 / ATCC MYA-2876)</name>
    <name type="common">Yeast</name>
    <dbReference type="NCBI Taxonomy" id="237561"/>
    <lineage>
        <taxon>Eukaryota</taxon>
        <taxon>Fungi</taxon>
        <taxon>Dikarya</taxon>
        <taxon>Ascomycota</taxon>
        <taxon>Saccharomycotina</taxon>
        <taxon>Pichiomycetes</taxon>
        <taxon>Debaryomycetaceae</taxon>
        <taxon>Candida/Lodderomyces clade</taxon>
        <taxon>Candida</taxon>
    </lineage>
</organism>
<proteinExistence type="evidence at protein level"/>
<evidence type="ECO:0000250" key="1"/>
<evidence type="ECO:0000256" key="2">
    <source>
        <dbReference type="SAM" id="MobiDB-lite"/>
    </source>
</evidence>
<evidence type="ECO:0000269" key="3">
    <source>
    </source>
</evidence>
<evidence type="ECO:0000305" key="4"/>
<feature type="chain" id="PRO_0000137580" description="Inorganic pyrophosphatase">
    <location>
        <begin position="1"/>
        <end position="288"/>
    </location>
</feature>
<feature type="region of interest" description="Disordered" evidence="2">
    <location>
        <begin position="252"/>
        <end position="271"/>
    </location>
</feature>
<feature type="compositionally biased region" description="Low complexity" evidence="2">
    <location>
        <begin position="258"/>
        <end position="271"/>
    </location>
</feature>
<feature type="binding site" evidence="1">
    <location>
        <position position="80"/>
    </location>
    <ligand>
        <name>diphosphate</name>
        <dbReference type="ChEBI" id="CHEBI:33019"/>
    </ligand>
</feature>
<feature type="binding site" evidence="1">
    <location>
        <position position="117"/>
    </location>
    <ligand>
        <name>Mg(2+)</name>
        <dbReference type="ChEBI" id="CHEBI:18420"/>
        <label>1</label>
    </ligand>
</feature>
<feature type="binding site" evidence="1">
    <location>
        <position position="122"/>
    </location>
    <ligand>
        <name>Mg(2+)</name>
        <dbReference type="ChEBI" id="CHEBI:18420"/>
        <label>1</label>
    </ligand>
</feature>
<feature type="binding site" evidence="1">
    <location>
        <position position="122"/>
    </location>
    <ligand>
        <name>Mg(2+)</name>
        <dbReference type="ChEBI" id="CHEBI:18420"/>
        <label>2</label>
    </ligand>
</feature>
<feature type="binding site" evidence="1">
    <location>
        <position position="154"/>
    </location>
    <ligand>
        <name>Mg(2+)</name>
        <dbReference type="ChEBI" id="CHEBI:18420"/>
        <label>1</label>
    </ligand>
</feature>
<comment type="catalytic activity">
    <reaction>
        <text>diphosphate + H2O = 2 phosphate + H(+)</text>
        <dbReference type="Rhea" id="RHEA:24576"/>
        <dbReference type="ChEBI" id="CHEBI:15377"/>
        <dbReference type="ChEBI" id="CHEBI:15378"/>
        <dbReference type="ChEBI" id="CHEBI:33019"/>
        <dbReference type="ChEBI" id="CHEBI:43474"/>
        <dbReference type="EC" id="3.6.1.1"/>
    </reaction>
</comment>
<comment type="cofactor">
    <cofactor evidence="1">
        <name>Mg(2+)</name>
        <dbReference type="ChEBI" id="CHEBI:18420"/>
    </cofactor>
</comment>
<comment type="subcellular location">
    <subcellularLocation>
        <location evidence="3">Cytoplasm</location>
    </subcellularLocation>
</comment>
<comment type="miscellaneous">
    <text>Has antigenic properties. Elicits a specific immune response in systemic candidiasis human patients undergoing malignant hematological disorders.</text>
</comment>
<comment type="similarity">
    <text evidence="4">Belongs to the PPase family.</text>
</comment>
<gene>
    <name type="primary">IPP1</name>
    <name type="ordered locus">CAALFM_C208810CA</name>
    <name type="ORF">CaO19.11072</name>
    <name type="ORF">CaO19.3590</name>
</gene>
<protein>
    <recommendedName>
        <fullName>Inorganic pyrophosphatase</fullName>
        <ecNumber>3.6.1.1</ecNumber>
    </recommendedName>
    <alternativeName>
        <fullName>Pyrophosphate phospho-hydrolase</fullName>
        <shortName>PPase</shortName>
    </alternativeName>
</protein>
<reference key="1">
    <citation type="journal article" date="2004" name="Proc. Natl. Acad. Sci. U.S.A.">
        <title>The diploid genome sequence of Candida albicans.</title>
        <authorList>
            <person name="Jones T."/>
            <person name="Federspiel N.A."/>
            <person name="Chibana H."/>
            <person name="Dungan J."/>
            <person name="Kalman S."/>
            <person name="Magee B.B."/>
            <person name="Newport G."/>
            <person name="Thorstenson Y.R."/>
            <person name="Agabian N."/>
            <person name="Magee P.T."/>
            <person name="Davis R.W."/>
            <person name="Scherer S."/>
        </authorList>
    </citation>
    <scope>NUCLEOTIDE SEQUENCE [LARGE SCALE GENOMIC DNA]</scope>
    <source>
        <strain>SC5314 / ATCC MYA-2876</strain>
    </source>
</reference>
<reference key="2">
    <citation type="journal article" date="2007" name="Genome Biol.">
        <title>Assembly of the Candida albicans genome into sixteen supercontigs aligned on the eight chromosomes.</title>
        <authorList>
            <person name="van het Hoog M."/>
            <person name="Rast T.J."/>
            <person name="Martchenko M."/>
            <person name="Grindle S."/>
            <person name="Dignard D."/>
            <person name="Hogues H."/>
            <person name="Cuomo C."/>
            <person name="Berriman M."/>
            <person name="Scherer S."/>
            <person name="Magee B.B."/>
            <person name="Whiteway M."/>
            <person name="Chibana H."/>
            <person name="Nantel A."/>
            <person name="Magee P.T."/>
        </authorList>
    </citation>
    <scope>GENOME REANNOTATION</scope>
    <source>
        <strain>SC5314 / ATCC MYA-2876</strain>
    </source>
</reference>
<reference key="3">
    <citation type="journal article" date="2013" name="Genome Biol.">
        <title>Assembly of a phased diploid Candida albicans genome facilitates allele-specific measurements and provides a simple model for repeat and indel structure.</title>
        <authorList>
            <person name="Muzzey D."/>
            <person name="Schwartz K."/>
            <person name="Weissman J.S."/>
            <person name="Sherlock G."/>
        </authorList>
    </citation>
    <scope>NUCLEOTIDE SEQUENCE [LARGE SCALE GENOMIC DNA]</scope>
    <scope>GENOME REANNOTATION</scope>
    <source>
        <strain>SC5314 / ATCC MYA-2876</strain>
    </source>
</reference>
<reference key="4">
    <citation type="journal article" date="2004" name="Proteomics">
        <title>Proteomics-based identification of novel Candida albicans antigens for diagnosis of systemic candidiasis in patients with underlying hematological malignancies.</title>
        <authorList>
            <person name="Pitarch A."/>
            <person name="Abian J."/>
            <person name="Carrascal M."/>
            <person name="Sanchez M."/>
            <person name="Nombela C."/>
            <person name="Gil C."/>
        </authorList>
    </citation>
    <scope>PROTEIN SEQUENCE OF 186-192</scope>
    <scope>SUBCELLULAR LOCATION</scope>
    <scope>ANTIGENICITY</scope>
    <source>
        <strain>SC5314 / ATCC MYA-2876</strain>
        <tissue>Protoplast</tissue>
    </source>
</reference>